<protein>
    <recommendedName>
        <fullName evidence="1">UDP-N-acetylmuramate--L-alanine ligase</fullName>
        <ecNumber evidence="1">6.3.2.8</ecNumber>
    </recommendedName>
    <alternativeName>
        <fullName evidence="1">UDP-N-acetylmuramoyl-L-alanine synthetase</fullName>
    </alternativeName>
</protein>
<sequence>MTKTYHFIGIKGSGMSALALMLHQMGHKVQGSDVEKYYFTQRGLEQAGIQILPFDEKNITADVELIAGNAFRPDNNVEIAYADAQGYTYKRYHEFLGEFMKGFTSLGVAGAHGKTSTTGLLAHVMRNITDTSFLIGDGTGRGSANAQYFVFESDEYERHFAPYHPEYSIITNIDFDHPDYFTSLEDVFNAFNDYAKQVKNALFVFGEDEQLRRITANAPIYYYGLEDNNDFVAYDLKPSTSGSQFKVRHGEEELGEFQIPTFGKHNVMNATAVIANLYIAGFDLQLVAEHLKTFGGVKRRFTEKIVNDTVIIDDFAHHPTEIIATIDAARQKYPSKELVAIFQPHTFTRTIALLDEFADALNGADAVYLAQIYGSARETDNGQVKVEDLAAKINKKGGLVTVENTSPLLDHDNAVYVFMGAGDIQSYEYSFERLLSNLTNNVQ</sequence>
<feature type="chain" id="PRO_1000004428" description="UDP-N-acetylmuramate--L-alanine ligase">
    <location>
        <begin position="1"/>
        <end position="443"/>
    </location>
</feature>
<feature type="binding site" evidence="1">
    <location>
        <begin position="110"/>
        <end position="116"/>
    </location>
    <ligand>
        <name>ATP</name>
        <dbReference type="ChEBI" id="CHEBI:30616"/>
    </ligand>
</feature>
<organism>
    <name type="scientific">Streptococcus suis (strain 05ZYH33)</name>
    <dbReference type="NCBI Taxonomy" id="391295"/>
    <lineage>
        <taxon>Bacteria</taxon>
        <taxon>Bacillati</taxon>
        <taxon>Bacillota</taxon>
        <taxon>Bacilli</taxon>
        <taxon>Lactobacillales</taxon>
        <taxon>Streptococcaceae</taxon>
        <taxon>Streptococcus</taxon>
    </lineage>
</organism>
<gene>
    <name evidence="1" type="primary">murC</name>
    <name type="ordered locus">SSU05_1720</name>
</gene>
<accession>A4VX47</accession>
<keyword id="KW-0067">ATP-binding</keyword>
<keyword id="KW-0131">Cell cycle</keyword>
<keyword id="KW-0132">Cell division</keyword>
<keyword id="KW-0133">Cell shape</keyword>
<keyword id="KW-0961">Cell wall biogenesis/degradation</keyword>
<keyword id="KW-0963">Cytoplasm</keyword>
<keyword id="KW-0436">Ligase</keyword>
<keyword id="KW-0547">Nucleotide-binding</keyword>
<keyword id="KW-0573">Peptidoglycan synthesis</keyword>
<name>MURC_STRSY</name>
<comment type="function">
    <text evidence="1">Cell wall formation.</text>
</comment>
<comment type="catalytic activity">
    <reaction evidence="1">
        <text>UDP-N-acetyl-alpha-D-muramate + L-alanine + ATP = UDP-N-acetyl-alpha-D-muramoyl-L-alanine + ADP + phosphate + H(+)</text>
        <dbReference type="Rhea" id="RHEA:23372"/>
        <dbReference type="ChEBI" id="CHEBI:15378"/>
        <dbReference type="ChEBI" id="CHEBI:30616"/>
        <dbReference type="ChEBI" id="CHEBI:43474"/>
        <dbReference type="ChEBI" id="CHEBI:57972"/>
        <dbReference type="ChEBI" id="CHEBI:70757"/>
        <dbReference type="ChEBI" id="CHEBI:83898"/>
        <dbReference type="ChEBI" id="CHEBI:456216"/>
        <dbReference type="EC" id="6.3.2.8"/>
    </reaction>
</comment>
<comment type="pathway">
    <text evidence="1">Cell wall biogenesis; peptidoglycan biosynthesis.</text>
</comment>
<comment type="subcellular location">
    <subcellularLocation>
        <location evidence="1">Cytoplasm</location>
    </subcellularLocation>
</comment>
<comment type="similarity">
    <text evidence="1">Belongs to the MurCDEF family.</text>
</comment>
<evidence type="ECO:0000255" key="1">
    <source>
        <dbReference type="HAMAP-Rule" id="MF_00046"/>
    </source>
</evidence>
<proteinExistence type="inferred from homology"/>
<dbReference type="EC" id="6.3.2.8" evidence="1"/>
<dbReference type="EMBL" id="CP000407">
    <property type="protein sequence ID" value="ABP90686.1"/>
    <property type="molecule type" value="Genomic_DNA"/>
</dbReference>
<dbReference type="SMR" id="A4VX47"/>
<dbReference type="STRING" id="391295.SSU05_1720"/>
<dbReference type="DNASU" id="5100750"/>
<dbReference type="KEGG" id="ssu:SSU05_1720"/>
<dbReference type="eggNOG" id="COG0773">
    <property type="taxonomic scope" value="Bacteria"/>
</dbReference>
<dbReference type="HOGENOM" id="CLU_028104_1_0_9"/>
<dbReference type="UniPathway" id="UPA00219"/>
<dbReference type="GO" id="GO:0005737">
    <property type="term" value="C:cytoplasm"/>
    <property type="evidence" value="ECO:0007669"/>
    <property type="project" value="UniProtKB-SubCell"/>
</dbReference>
<dbReference type="GO" id="GO:0005524">
    <property type="term" value="F:ATP binding"/>
    <property type="evidence" value="ECO:0007669"/>
    <property type="project" value="UniProtKB-UniRule"/>
</dbReference>
<dbReference type="GO" id="GO:0008763">
    <property type="term" value="F:UDP-N-acetylmuramate-L-alanine ligase activity"/>
    <property type="evidence" value="ECO:0007669"/>
    <property type="project" value="UniProtKB-UniRule"/>
</dbReference>
<dbReference type="GO" id="GO:0051301">
    <property type="term" value="P:cell division"/>
    <property type="evidence" value="ECO:0007669"/>
    <property type="project" value="UniProtKB-KW"/>
</dbReference>
<dbReference type="GO" id="GO:0071555">
    <property type="term" value="P:cell wall organization"/>
    <property type="evidence" value="ECO:0007669"/>
    <property type="project" value="UniProtKB-KW"/>
</dbReference>
<dbReference type="GO" id="GO:0009252">
    <property type="term" value="P:peptidoglycan biosynthetic process"/>
    <property type="evidence" value="ECO:0007669"/>
    <property type="project" value="UniProtKB-UniRule"/>
</dbReference>
<dbReference type="GO" id="GO:0008360">
    <property type="term" value="P:regulation of cell shape"/>
    <property type="evidence" value="ECO:0007669"/>
    <property type="project" value="UniProtKB-KW"/>
</dbReference>
<dbReference type="Gene3D" id="3.90.190.20">
    <property type="entry name" value="Mur ligase, C-terminal domain"/>
    <property type="match status" value="1"/>
</dbReference>
<dbReference type="Gene3D" id="3.40.1190.10">
    <property type="entry name" value="Mur-like, catalytic domain"/>
    <property type="match status" value="1"/>
</dbReference>
<dbReference type="Gene3D" id="3.40.50.720">
    <property type="entry name" value="NAD(P)-binding Rossmann-like Domain"/>
    <property type="match status" value="1"/>
</dbReference>
<dbReference type="HAMAP" id="MF_00046">
    <property type="entry name" value="MurC"/>
    <property type="match status" value="1"/>
</dbReference>
<dbReference type="InterPro" id="IPR036565">
    <property type="entry name" value="Mur-like_cat_sf"/>
</dbReference>
<dbReference type="InterPro" id="IPR004101">
    <property type="entry name" value="Mur_ligase_C"/>
</dbReference>
<dbReference type="InterPro" id="IPR036615">
    <property type="entry name" value="Mur_ligase_C_dom_sf"/>
</dbReference>
<dbReference type="InterPro" id="IPR013221">
    <property type="entry name" value="Mur_ligase_cen"/>
</dbReference>
<dbReference type="InterPro" id="IPR000713">
    <property type="entry name" value="Mur_ligase_N"/>
</dbReference>
<dbReference type="InterPro" id="IPR050061">
    <property type="entry name" value="MurCDEF_pg_biosynth"/>
</dbReference>
<dbReference type="InterPro" id="IPR005758">
    <property type="entry name" value="UDP-N-AcMur_Ala_ligase_MurC"/>
</dbReference>
<dbReference type="NCBIfam" id="TIGR01082">
    <property type="entry name" value="murC"/>
    <property type="match status" value="1"/>
</dbReference>
<dbReference type="PANTHER" id="PTHR43445:SF3">
    <property type="entry name" value="UDP-N-ACETYLMURAMATE--L-ALANINE LIGASE"/>
    <property type="match status" value="1"/>
</dbReference>
<dbReference type="PANTHER" id="PTHR43445">
    <property type="entry name" value="UDP-N-ACETYLMURAMATE--L-ALANINE LIGASE-RELATED"/>
    <property type="match status" value="1"/>
</dbReference>
<dbReference type="Pfam" id="PF01225">
    <property type="entry name" value="Mur_ligase"/>
    <property type="match status" value="1"/>
</dbReference>
<dbReference type="Pfam" id="PF02875">
    <property type="entry name" value="Mur_ligase_C"/>
    <property type="match status" value="1"/>
</dbReference>
<dbReference type="Pfam" id="PF08245">
    <property type="entry name" value="Mur_ligase_M"/>
    <property type="match status" value="1"/>
</dbReference>
<dbReference type="SUPFAM" id="SSF51984">
    <property type="entry name" value="MurCD N-terminal domain"/>
    <property type="match status" value="1"/>
</dbReference>
<dbReference type="SUPFAM" id="SSF53623">
    <property type="entry name" value="MurD-like peptide ligases, catalytic domain"/>
    <property type="match status" value="1"/>
</dbReference>
<dbReference type="SUPFAM" id="SSF53244">
    <property type="entry name" value="MurD-like peptide ligases, peptide-binding domain"/>
    <property type="match status" value="1"/>
</dbReference>
<reference key="1">
    <citation type="journal article" date="2007" name="PLoS ONE">
        <title>A glimpse of streptococcal toxic shock syndrome from comparative genomics of S. suis 2 Chinese isolates.</title>
        <authorList>
            <person name="Chen C."/>
            <person name="Tang J."/>
            <person name="Dong W."/>
            <person name="Wang C."/>
            <person name="Feng Y."/>
            <person name="Wang J."/>
            <person name="Zheng F."/>
            <person name="Pan X."/>
            <person name="Liu D."/>
            <person name="Li M."/>
            <person name="Song Y."/>
            <person name="Zhu X."/>
            <person name="Sun H."/>
            <person name="Feng T."/>
            <person name="Guo Z."/>
            <person name="Ju A."/>
            <person name="Ge J."/>
            <person name="Dong Y."/>
            <person name="Sun W."/>
            <person name="Jiang Y."/>
            <person name="Wang J."/>
            <person name="Yan J."/>
            <person name="Yang H."/>
            <person name="Wang X."/>
            <person name="Gao G.F."/>
            <person name="Yang R."/>
            <person name="Wang J."/>
            <person name="Yu J."/>
        </authorList>
    </citation>
    <scope>NUCLEOTIDE SEQUENCE [LARGE SCALE GENOMIC DNA]</scope>
    <source>
        <strain>05ZYH33</strain>
    </source>
</reference>